<proteinExistence type="evidence at protein level"/>
<feature type="chain" id="PRO_0000457026" description="Terpene synthase 9">
    <location>
        <begin position="1"/>
        <end position="341"/>
    </location>
</feature>
<feature type="short sequence motif" description="DDxx(x)D/E motif" evidence="1">
    <location>
        <begin position="81"/>
        <end position="86"/>
    </location>
</feature>
<feature type="short sequence motif" description="NDxxSxxxD/E motif" evidence="1">
    <location>
        <begin position="222"/>
        <end position="230"/>
    </location>
</feature>
<sequence>MSLSFKNIVFPEEWQVPPNDYIFIDDCYEEALQFNLFERGDEKSYTWMYHTISCCAYFWCKCSRSEMKLIGHLMLWTFLLDDILDSDKVNDAEAIEMIKRTEFIFIEGKLPENPTDLEKYTCYLRNEGLKIAGDREDMFNMFLTNSIQWILSIIPLNKSMEHKLPPHLQLHGYLRKLNVGVELCQGFTYLIFANNKVNPAIFNSPRYKKMLECTSMVVSHVNDMASYCKEVKNGGGFINSLLILQKRADPLSIEHSYQVIAEQTNAFIRDFIYQEKMLLESISDEQQNEVKVFLDHMKYLMKGNYLWSGTTARYASKSSPFVEMQKSLNVHLDNEIDASSL</sequence>
<accession>F0ZK52</accession>
<gene>
    <name evidence="4" type="primary">TPS9</name>
    <name type="ORF">DICPUDRAFT_97830</name>
</gene>
<dbReference type="EC" id="4.2.3.-" evidence="3"/>
<dbReference type="EMBL" id="MG262470">
    <property type="protein sequence ID" value="AXN72978.1"/>
    <property type="molecule type" value="mRNA"/>
</dbReference>
<dbReference type="EMBL" id="GL871052">
    <property type="protein sequence ID" value="EGC35663.1"/>
    <property type="molecule type" value="Genomic_DNA"/>
</dbReference>
<dbReference type="RefSeq" id="XP_003287796.1">
    <property type="nucleotide sequence ID" value="XM_003287748.1"/>
</dbReference>
<dbReference type="SMR" id="F0ZK52"/>
<dbReference type="EnsemblProtists" id="EGC35663">
    <property type="protein sequence ID" value="EGC35663"/>
    <property type="gene ID" value="DICPUDRAFT_97830"/>
</dbReference>
<dbReference type="GeneID" id="10500986"/>
<dbReference type="KEGG" id="dpp:DICPUDRAFT_97830"/>
<dbReference type="VEuPathDB" id="AmoebaDB:DICPUDRAFT_97830"/>
<dbReference type="eggNOG" id="ENOG502RCXD">
    <property type="taxonomic scope" value="Eukaryota"/>
</dbReference>
<dbReference type="InParanoid" id="F0ZK52"/>
<dbReference type="OMA" id="TISCCAY"/>
<dbReference type="OrthoDB" id="22440at2759"/>
<dbReference type="Proteomes" id="UP000001064">
    <property type="component" value="Unassembled WGS sequence"/>
</dbReference>
<dbReference type="GO" id="GO:0046872">
    <property type="term" value="F:metal ion binding"/>
    <property type="evidence" value="ECO:0007669"/>
    <property type="project" value="UniProtKB-KW"/>
</dbReference>
<dbReference type="GO" id="GO:0010333">
    <property type="term" value="F:terpene synthase activity"/>
    <property type="evidence" value="ECO:0000318"/>
    <property type="project" value="GO_Central"/>
</dbReference>
<dbReference type="GO" id="GO:0046246">
    <property type="term" value="P:terpene biosynthetic process"/>
    <property type="evidence" value="ECO:0007669"/>
    <property type="project" value="UniProtKB-ARBA"/>
</dbReference>
<dbReference type="FunFam" id="1.10.600.10:FF:000047">
    <property type="entry name" value="Terpene synthase"/>
    <property type="match status" value="1"/>
</dbReference>
<dbReference type="Gene3D" id="1.10.600.10">
    <property type="entry name" value="Farnesyl Diphosphate Synthase"/>
    <property type="match status" value="1"/>
</dbReference>
<dbReference type="InterPro" id="IPR008949">
    <property type="entry name" value="Isoprenoid_synthase_dom_sf"/>
</dbReference>
<dbReference type="InterPro" id="IPR034686">
    <property type="entry name" value="Terpene_cyclase-like_2"/>
</dbReference>
<dbReference type="PANTHER" id="PTHR35201:SF4">
    <property type="entry name" value="BETA-PINACENE SYNTHASE-RELATED"/>
    <property type="match status" value="1"/>
</dbReference>
<dbReference type="PANTHER" id="PTHR35201">
    <property type="entry name" value="TERPENE SYNTHASE"/>
    <property type="match status" value="1"/>
</dbReference>
<dbReference type="Pfam" id="PF19086">
    <property type="entry name" value="Terpene_syn_C_2"/>
    <property type="match status" value="1"/>
</dbReference>
<dbReference type="SUPFAM" id="SSF48576">
    <property type="entry name" value="Terpenoid synthases"/>
    <property type="match status" value="1"/>
</dbReference>
<comment type="function">
    <text evidence="3">Terpene synthase that converts its substrate farnesyl diphosphate (FPP) into the sesquiterpenes beta-elemene, germacrene D and a yet unidentified sesquiterpene.</text>
</comment>
<comment type="catalytic activity">
    <reaction evidence="3">
        <text>(2E,6E)-farnesyl diphosphate = (1S,2S,4R)-beta-elemene + diphosphate</text>
        <dbReference type="Rhea" id="RHEA:68712"/>
        <dbReference type="ChEBI" id="CHEBI:33019"/>
        <dbReference type="ChEBI" id="CHEBI:62855"/>
        <dbReference type="ChEBI" id="CHEBI:175763"/>
    </reaction>
    <physiologicalReaction direction="left-to-right" evidence="3">
        <dbReference type="Rhea" id="RHEA:68713"/>
    </physiologicalReaction>
</comment>
<comment type="catalytic activity">
    <reaction evidence="3">
        <text>(2E,6E)-farnesyl diphosphate = germacrene D + diphosphate</text>
        <dbReference type="Rhea" id="RHEA:68716"/>
        <dbReference type="ChEBI" id="CHEBI:33019"/>
        <dbReference type="ChEBI" id="CHEBI:49045"/>
        <dbReference type="ChEBI" id="CHEBI:175763"/>
    </reaction>
    <physiologicalReaction direction="left-to-right" evidence="3">
        <dbReference type="Rhea" id="RHEA:68717"/>
    </physiologicalReaction>
</comment>
<comment type="domain">
    <text evidence="2">Contains several highly conserved motifs that are important for catalytic activity including the aspartate-rich 'DDxx(x)D/E' motif and the 'NDxxSxxxD/E' motif, both of which are involved in complexing metal ions to coordinate the binding of the isoprenyl diphosphate substrate in the active site.</text>
</comment>
<comment type="similarity">
    <text evidence="5">Belongs to the terpene synthase family.</text>
</comment>
<reference key="1">
    <citation type="journal article" date="2018" name="Sci. Rep.">
        <title>Diversity and Functional Evolution of Terpene Synthases in Dictyostelid Social Amoebae.</title>
        <authorList>
            <person name="Chen X."/>
            <person name="Kollner T.G."/>
            <person name="Shaulsky G."/>
            <person name="Jia Q."/>
            <person name="Dickschat J.S."/>
            <person name="Gershenzon J."/>
            <person name="Chen F."/>
        </authorList>
    </citation>
    <scope>NUCLEOTIDE SEQUENCE [MRNA]</scope>
    <scope>FUNCTION</scope>
    <scope>CATALYTIC ACTIVITY</scope>
    <source>
        <strain>AX1</strain>
    </source>
</reference>
<reference key="2">
    <citation type="journal article" date="2011" name="Genome Biol.">
        <title>Comparative genomics of the social amoebae Dictyostelium discoideum and Dictyostelium purpureum.</title>
        <authorList>
            <consortium name="US DOE Joint Genome Institute (JGI-PGF)"/>
            <person name="Sucgang R."/>
            <person name="Kuo A."/>
            <person name="Tian X."/>
            <person name="Salerno W."/>
            <person name="Parikh A."/>
            <person name="Feasley C.L."/>
            <person name="Dalin E."/>
            <person name="Tu H."/>
            <person name="Huang E."/>
            <person name="Barry K."/>
            <person name="Lindquist E."/>
            <person name="Shapiro H."/>
            <person name="Bruce D."/>
            <person name="Schmutz J."/>
            <person name="Salamov A."/>
            <person name="Fey P."/>
            <person name="Gaudet P."/>
            <person name="Anjard C."/>
            <person name="Babu M.M."/>
            <person name="Basu S."/>
            <person name="Bushmanova Y."/>
            <person name="van der Wel H."/>
            <person name="Katoh-Kurasawa M."/>
            <person name="Dinh C."/>
            <person name="Coutinho P.M."/>
            <person name="Saito T."/>
            <person name="Elias M."/>
            <person name="Schaap P."/>
            <person name="Kay R.R."/>
            <person name="Henrissat B."/>
            <person name="Eichinger L."/>
            <person name="Rivero F."/>
            <person name="Putnam N.H."/>
            <person name="West C.M."/>
            <person name="Loomis W.F."/>
            <person name="Chisholm R.L."/>
            <person name="Shaulsky G."/>
            <person name="Strassmann J.E."/>
            <person name="Queller D.C."/>
            <person name="Kuspa A."/>
            <person name="Grigoriev I.V."/>
        </authorList>
    </citation>
    <scope>NUCLEOTIDE SEQUENCE [LARGE SCALE GENOMIC DNA]</scope>
    <source>
        <strain>QSDP1</strain>
    </source>
</reference>
<organism>
    <name type="scientific">Dictyostelium purpureum</name>
    <name type="common">Slime mold</name>
    <dbReference type="NCBI Taxonomy" id="5786"/>
    <lineage>
        <taxon>Eukaryota</taxon>
        <taxon>Amoebozoa</taxon>
        <taxon>Evosea</taxon>
        <taxon>Eumycetozoa</taxon>
        <taxon>Dictyostelia</taxon>
        <taxon>Dictyosteliales</taxon>
        <taxon>Dictyosteliaceae</taxon>
        <taxon>Dictyostelium</taxon>
    </lineage>
</organism>
<keyword id="KW-0456">Lyase</keyword>
<keyword id="KW-0479">Metal-binding</keyword>
<keyword id="KW-1185">Reference proteome</keyword>
<protein>
    <recommendedName>
        <fullName evidence="4">Terpene synthase 9</fullName>
        <ecNumber evidence="3">4.2.3.-</ecNumber>
    </recommendedName>
</protein>
<name>TPS9_DICPU</name>
<evidence type="ECO:0000250" key="1">
    <source>
        <dbReference type="UniProtKB" id="Q54BE5"/>
    </source>
</evidence>
<evidence type="ECO:0000250" key="2">
    <source>
        <dbReference type="UniProtKB" id="Q55E23"/>
    </source>
</evidence>
<evidence type="ECO:0000269" key="3">
    <source>
    </source>
</evidence>
<evidence type="ECO:0000303" key="4">
    <source>
    </source>
</evidence>
<evidence type="ECO:0000305" key="5"/>